<protein>
    <recommendedName>
        <fullName>MANSC domain-containing protein 4</fullName>
    </recommendedName>
</protein>
<reference key="1">
    <citation type="journal article" date="2006" name="Nature">
        <title>The finished DNA sequence of human chromosome 12.</title>
        <authorList>
            <person name="Scherer S.E."/>
            <person name="Muzny D.M."/>
            <person name="Buhay C.J."/>
            <person name="Chen R."/>
            <person name="Cree A."/>
            <person name="Ding Y."/>
            <person name="Dugan-Rocha S."/>
            <person name="Gill R."/>
            <person name="Gunaratne P."/>
            <person name="Harris R.A."/>
            <person name="Hawes A.C."/>
            <person name="Hernandez J."/>
            <person name="Hodgson A.V."/>
            <person name="Hume J."/>
            <person name="Jackson A."/>
            <person name="Khan Z.M."/>
            <person name="Kovar-Smith C."/>
            <person name="Lewis L.R."/>
            <person name="Lozado R.J."/>
            <person name="Metzker M.L."/>
            <person name="Milosavljevic A."/>
            <person name="Miner G.R."/>
            <person name="Montgomery K.T."/>
            <person name="Morgan M.B."/>
            <person name="Nazareth L.V."/>
            <person name="Scott G."/>
            <person name="Sodergren E."/>
            <person name="Song X.-Z."/>
            <person name="Steffen D."/>
            <person name="Lovering R.C."/>
            <person name="Wheeler D.A."/>
            <person name="Worley K.C."/>
            <person name="Yuan Y."/>
            <person name="Zhang Z."/>
            <person name="Adams C.Q."/>
            <person name="Ansari-Lari M.A."/>
            <person name="Ayele M."/>
            <person name="Brown M.J."/>
            <person name="Chen G."/>
            <person name="Chen Z."/>
            <person name="Clerc-Blankenburg K.P."/>
            <person name="Davis C."/>
            <person name="Delgado O."/>
            <person name="Dinh H.H."/>
            <person name="Draper H."/>
            <person name="Gonzalez-Garay M.L."/>
            <person name="Havlak P."/>
            <person name="Jackson L.R."/>
            <person name="Jacob L.S."/>
            <person name="Kelly S.H."/>
            <person name="Li L."/>
            <person name="Li Z."/>
            <person name="Liu J."/>
            <person name="Liu W."/>
            <person name="Lu J."/>
            <person name="Maheshwari M."/>
            <person name="Nguyen B.-V."/>
            <person name="Okwuonu G.O."/>
            <person name="Pasternak S."/>
            <person name="Perez L.M."/>
            <person name="Plopper F.J.H."/>
            <person name="Santibanez J."/>
            <person name="Shen H."/>
            <person name="Tabor P.E."/>
            <person name="Verduzco D."/>
            <person name="Waldron L."/>
            <person name="Wang Q."/>
            <person name="Williams G.A."/>
            <person name="Zhang J."/>
            <person name="Zhou J."/>
            <person name="Allen C.C."/>
            <person name="Amin A.G."/>
            <person name="Anyalebechi V."/>
            <person name="Bailey M."/>
            <person name="Barbaria J.A."/>
            <person name="Bimage K.E."/>
            <person name="Bryant N.P."/>
            <person name="Burch P.E."/>
            <person name="Burkett C.E."/>
            <person name="Burrell K.L."/>
            <person name="Calderon E."/>
            <person name="Cardenas V."/>
            <person name="Carter K."/>
            <person name="Casias K."/>
            <person name="Cavazos I."/>
            <person name="Cavazos S.R."/>
            <person name="Ceasar H."/>
            <person name="Chacko J."/>
            <person name="Chan S.N."/>
            <person name="Chavez D."/>
            <person name="Christopoulos C."/>
            <person name="Chu J."/>
            <person name="Cockrell R."/>
            <person name="Cox C.D."/>
            <person name="Dang M."/>
            <person name="Dathorne S.R."/>
            <person name="David R."/>
            <person name="Davis C.M."/>
            <person name="Davy-Carroll L."/>
            <person name="Deshazo D.R."/>
            <person name="Donlin J.E."/>
            <person name="D'Souza L."/>
            <person name="Eaves K.A."/>
            <person name="Egan A."/>
            <person name="Emery-Cohen A.J."/>
            <person name="Escotto M."/>
            <person name="Flagg N."/>
            <person name="Forbes L.D."/>
            <person name="Gabisi A.M."/>
            <person name="Garza M."/>
            <person name="Hamilton C."/>
            <person name="Henderson N."/>
            <person name="Hernandez O."/>
            <person name="Hines S."/>
            <person name="Hogues M.E."/>
            <person name="Huang M."/>
            <person name="Idlebird D.G."/>
            <person name="Johnson R."/>
            <person name="Jolivet A."/>
            <person name="Jones S."/>
            <person name="Kagan R."/>
            <person name="King L.M."/>
            <person name="Leal B."/>
            <person name="Lebow H."/>
            <person name="Lee S."/>
            <person name="LeVan J.M."/>
            <person name="Lewis L.C."/>
            <person name="London P."/>
            <person name="Lorensuhewa L.M."/>
            <person name="Loulseged H."/>
            <person name="Lovett D.A."/>
            <person name="Lucier A."/>
            <person name="Lucier R.L."/>
            <person name="Ma J."/>
            <person name="Madu R.C."/>
            <person name="Mapua P."/>
            <person name="Martindale A.D."/>
            <person name="Martinez E."/>
            <person name="Massey E."/>
            <person name="Mawhiney S."/>
            <person name="Meador M.G."/>
            <person name="Mendez S."/>
            <person name="Mercado C."/>
            <person name="Mercado I.C."/>
            <person name="Merritt C.E."/>
            <person name="Miner Z.L."/>
            <person name="Minja E."/>
            <person name="Mitchell T."/>
            <person name="Mohabbat F."/>
            <person name="Mohabbat K."/>
            <person name="Montgomery B."/>
            <person name="Moore N."/>
            <person name="Morris S."/>
            <person name="Munidasa M."/>
            <person name="Ngo R.N."/>
            <person name="Nguyen N.B."/>
            <person name="Nickerson E."/>
            <person name="Nwaokelemeh O.O."/>
            <person name="Nwokenkwo S."/>
            <person name="Obregon M."/>
            <person name="Oguh M."/>
            <person name="Oragunye N."/>
            <person name="Oviedo R.J."/>
            <person name="Parish B.J."/>
            <person name="Parker D.N."/>
            <person name="Parrish J."/>
            <person name="Parks K.L."/>
            <person name="Paul H.A."/>
            <person name="Payton B.A."/>
            <person name="Perez A."/>
            <person name="Perrin W."/>
            <person name="Pickens A."/>
            <person name="Primus E.L."/>
            <person name="Pu L.-L."/>
            <person name="Puazo M."/>
            <person name="Quiles M.M."/>
            <person name="Quiroz J.B."/>
            <person name="Rabata D."/>
            <person name="Reeves K."/>
            <person name="Ruiz S.J."/>
            <person name="Shao H."/>
            <person name="Sisson I."/>
            <person name="Sonaike T."/>
            <person name="Sorelle R.P."/>
            <person name="Sutton A.E."/>
            <person name="Svatek A.F."/>
            <person name="Svetz L.A."/>
            <person name="Tamerisa K.S."/>
            <person name="Taylor T.R."/>
            <person name="Teague B."/>
            <person name="Thomas N."/>
            <person name="Thorn R.D."/>
            <person name="Trejos Z.Y."/>
            <person name="Trevino B.K."/>
            <person name="Ukegbu O.N."/>
            <person name="Urban J.B."/>
            <person name="Vasquez L.I."/>
            <person name="Vera V.A."/>
            <person name="Villasana D.M."/>
            <person name="Wang L."/>
            <person name="Ward-Moore S."/>
            <person name="Warren J.T."/>
            <person name="Wei X."/>
            <person name="White F."/>
            <person name="Williamson A.L."/>
            <person name="Wleczyk R."/>
            <person name="Wooden H.S."/>
            <person name="Wooden S.H."/>
            <person name="Yen J."/>
            <person name="Yoon L."/>
            <person name="Yoon V."/>
            <person name="Zorrilla S.E."/>
            <person name="Nelson D."/>
            <person name="Kucherlapati R."/>
            <person name="Weinstock G."/>
            <person name="Gibbs R.A."/>
        </authorList>
    </citation>
    <scope>NUCLEOTIDE SEQUENCE [LARGE SCALE GENOMIC DNA]</scope>
</reference>
<name>MANS4_HUMAN</name>
<gene>
    <name type="primary">MANSC4</name>
</gene>
<feature type="signal peptide" evidence="1">
    <location>
        <begin position="1"/>
        <end position="24"/>
    </location>
</feature>
<feature type="chain" id="PRO_0000349176" description="MANSC domain-containing protein 4">
    <location>
        <begin position="25"/>
        <end position="340"/>
    </location>
</feature>
<feature type="topological domain" description="Extracellular" evidence="1">
    <location>
        <begin position="25"/>
        <end position="284"/>
    </location>
</feature>
<feature type="transmembrane region" description="Helical" evidence="1">
    <location>
        <begin position="285"/>
        <end position="305"/>
    </location>
</feature>
<feature type="topological domain" description="Cytoplasmic" evidence="1">
    <location>
        <begin position="306"/>
        <end position="340"/>
    </location>
</feature>
<feature type="domain" description="MANSC" evidence="2">
    <location>
        <begin position="37"/>
        <end position="117"/>
    </location>
</feature>
<feature type="region of interest" description="Disordered" evidence="3">
    <location>
        <begin position="320"/>
        <end position="340"/>
    </location>
</feature>
<feature type="glycosylation site" description="N-linked (GlcNAc...) asparagine" evidence="1">
    <location>
        <position position="118"/>
    </location>
</feature>
<feature type="glycosylation site" description="N-linked (GlcNAc...) asparagine" evidence="1">
    <location>
        <position position="187"/>
    </location>
</feature>
<feature type="glycosylation site" description="N-linked (GlcNAc...) asparagine" evidence="1">
    <location>
        <position position="260"/>
    </location>
</feature>
<dbReference type="EMBL" id="AC009509">
    <property type="status" value="NOT_ANNOTATED_CDS"/>
    <property type="molecule type" value="Genomic_DNA"/>
</dbReference>
<dbReference type="CCDS" id="CCDS53770.1"/>
<dbReference type="RefSeq" id="NP_001139693.1">
    <property type="nucleotide sequence ID" value="NM_001146221.5"/>
</dbReference>
<dbReference type="BioGRID" id="938946">
    <property type="interactions" value="2"/>
</dbReference>
<dbReference type="FunCoup" id="A6NHS7">
    <property type="interactions" value="378"/>
</dbReference>
<dbReference type="STRING" id="9606.ENSP00000370673"/>
<dbReference type="GlyCosmos" id="A6NHS7">
    <property type="glycosylation" value="3 sites, No reported glycans"/>
</dbReference>
<dbReference type="GlyGen" id="A6NHS7">
    <property type="glycosylation" value="3 sites"/>
</dbReference>
<dbReference type="iPTMnet" id="A6NHS7"/>
<dbReference type="PhosphoSitePlus" id="A6NHS7"/>
<dbReference type="BioMuta" id="MANSC4"/>
<dbReference type="PaxDb" id="9606-ENSP00000370673"/>
<dbReference type="ProteomicsDB" id="1224"/>
<dbReference type="Antibodypedia" id="49381">
    <property type="antibodies" value="9 antibodies from 5 providers"/>
</dbReference>
<dbReference type="DNASU" id="100287284"/>
<dbReference type="Ensembl" id="ENST00000381273.4">
    <property type="protein sequence ID" value="ENSP00000370673.3"/>
    <property type="gene ID" value="ENSG00000205693.4"/>
</dbReference>
<dbReference type="GeneID" id="100287284"/>
<dbReference type="KEGG" id="hsa:100287284"/>
<dbReference type="MANE-Select" id="ENST00000381273.4">
    <property type="protein sequence ID" value="ENSP00000370673.3"/>
    <property type="RefSeq nucleotide sequence ID" value="NM_001146221.5"/>
    <property type="RefSeq protein sequence ID" value="NP_001139693.1"/>
</dbReference>
<dbReference type="UCSC" id="uc010sjs.2">
    <property type="organism name" value="human"/>
</dbReference>
<dbReference type="AGR" id="HGNC:40023"/>
<dbReference type="CTD" id="100287284"/>
<dbReference type="DisGeNET" id="100287284"/>
<dbReference type="GeneCards" id="MANSC4"/>
<dbReference type="HGNC" id="HGNC:40023">
    <property type="gene designation" value="MANSC4"/>
</dbReference>
<dbReference type="HPA" id="ENSG00000205693">
    <property type="expression patterns" value="Tissue enhanced (brain, testis)"/>
</dbReference>
<dbReference type="neXtProt" id="NX_A6NHS7"/>
<dbReference type="VEuPathDB" id="HostDB:ENSG00000205693"/>
<dbReference type="eggNOG" id="ENOG502RZQD">
    <property type="taxonomic scope" value="Eukaryota"/>
</dbReference>
<dbReference type="GeneTree" id="ENSGT00940000153377"/>
<dbReference type="HOGENOM" id="CLU_071212_0_0_1"/>
<dbReference type="InParanoid" id="A6NHS7"/>
<dbReference type="OMA" id="IHDNINC"/>
<dbReference type="OrthoDB" id="9447308at2759"/>
<dbReference type="PAN-GO" id="A6NHS7">
    <property type="GO annotations" value="0 GO annotations based on evolutionary models"/>
</dbReference>
<dbReference type="PhylomeDB" id="A6NHS7"/>
<dbReference type="TreeFam" id="TF353070"/>
<dbReference type="SignaLink" id="A6NHS7"/>
<dbReference type="BioGRID-ORCS" id="100287284">
    <property type="hits" value="12 hits in 1137 CRISPR screens"/>
</dbReference>
<dbReference type="Pharos" id="A6NHS7">
    <property type="development level" value="Tdark"/>
</dbReference>
<dbReference type="PRO" id="PR:A6NHS7"/>
<dbReference type="Proteomes" id="UP000005640">
    <property type="component" value="Chromosome 12"/>
</dbReference>
<dbReference type="RNAct" id="A6NHS7">
    <property type="molecule type" value="protein"/>
</dbReference>
<dbReference type="Bgee" id="ENSG00000205693">
    <property type="expression patterns" value="Expressed in male germ line stem cell (sensu Vertebrata) in testis and 65 other cell types or tissues"/>
</dbReference>
<dbReference type="GO" id="GO:0005886">
    <property type="term" value="C:plasma membrane"/>
    <property type="evidence" value="ECO:0000318"/>
    <property type="project" value="GO_Central"/>
</dbReference>
<dbReference type="GO" id="GO:0004867">
    <property type="term" value="F:serine-type endopeptidase inhibitor activity"/>
    <property type="evidence" value="ECO:0000318"/>
    <property type="project" value="GO_Central"/>
</dbReference>
<dbReference type="GO" id="GO:0008544">
    <property type="term" value="P:epidermis development"/>
    <property type="evidence" value="ECO:0000318"/>
    <property type="project" value="GO_Central"/>
</dbReference>
<dbReference type="GO" id="GO:0060429">
    <property type="term" value="P:epithelium development"/>
    <property type="evidence" value="ECO:0000318"/>
    <property type="project" value="GO_Central"/>
</dbReference>
<dbReference type="GO" id="GO:0030198">
    <property type="term" value="P:extracellular matrix organization"/>
    <property type="evidence" value="ECO:0000318"/>
    <property type="project" value="GO_Central"/>
</dbReference>
<dbReference type="InterPro" id="IPR013980">
    <property type="entry name" value="MANSC_dom"/>
</dbReference>
<dbReference type="InterPro" id="IPR011106">
    <property type="entry name" value="MANSC_N"/>
</dbReference>
<dbReference type="PANTHER" id="PTHR46750">
    <property type="entry name" value="KUNITZ-TYPE PROTEASE INHIBITOR 1"/>
    <property type="match status" value="1"/>
</dbReference>
<dbReference type="PANTHER" id="PTHR46750:SF2">
    <property type="entry name" value="MANSC DOMAIN-CONTAINING PROTEIN 4"/>
    <property type="match status" value="1"/>
</dbReference>
<dbReference type="Pfam" id="PF07502">
    <property type="entry name" value="MANEC"/>
    <property type="match status" value="1"/>
</dbReference>
<dbReference type="SMART" id="SM00765">
    <property type="entry name" value="MANEC"/>
    <property type="match status" value="1"/>
</dbReference>
<dbReference type="PROSITE" id="PS50986">
    <property type="entry name" value="MANSC"/>
    <property type="match status" value="1"/>
</dbReference>
<proteinExistence type="inferred from homology"/>
<keyword id="KW-0325">Glycoprotein</keyword>
<keyword id="KW-0472">Membrane</keyword>
<keyword id="KW-1185">Reference proteome</keyword>
<keyword id="KW-0732">Signal</keyword>
<keyword id="KW-0812">Transmembrane</keyword>
<keyword id="KW-1133">Transmembrane helix</keyword>
<sequence>MHVAEVAVNVILLLSMGWTSDSLCSPTIFYRDCWIRRFPGLLINLEESQKLGAQFLKYYSESTGQKCSRSCCLRKDVSCNLAVFYHSPIHDNINCLHVHCPTLESCILEPGTSAILYNITDGIDPDLLVFEQSPTYLNTRSSSNRWDRLRILKAMNLDKQTTTINGMLPSTEAPSSTTHQDLVVNTNSTSYSKELTTDFWARFTSLNESITTKINKVSPSTDFISNPDNKTISPFFEPIDTKLSHMPVPPGLNSSKQLLNKTKGYNSRNHTSANEDEVSVTSKTWLVSVALCTSVIFLGCCIVILASGCCGKQQGQYKPGQRKSGSLQIKNRNHMKENSS</sequence>
<organism>
    <name type="scientific">Homo sapiens</name>
    <name type="common">Human</name>
    <dbReference type="NCBI Taxonomy" id="9606"/>
    <lineage>
        <taxon>Eukaryota</taxon>
        <taxon>Metazoa</taxon>
        <taxon>Chordata</taxon>
        <taxon>Craniata</taxon>
        <taxon>Vertebrata</taxon>
        <taxon>Euteleostomi</taxon>
        <taxon>Mammalia</taxon>
        <taxon>Eutheria</taxon>
        <taxon>Euarchontoglires</taxon>
        <taxon>Primates</taxon>
        <taxon>Haplorrhini</taxon>
        <taxon>Catarrhini</taxon>
        <taxon>Hominidae</taxon>
        <taxon>Homo</taxon>
    </lineage>
</organism>
<evidence type="ECO:0000255" key="1"/>
<evidence type="ECO:0000255" key="2">
    <source>
        <dbReference type="PROSITE-ProRule" id="PRU00341"/>
    </source>
</evidence>
<evidence type="ECO:0000256" key="3">
    <source>
        <dbReference type="SAM" id="MobiDB-lite"/>
    </source>
</evidence>
<evidence type="ECO:0000305" key="4"/>
<comment type="subcellular location">
    <subcellularLocation>
        <location evidence="4">Membrane</location>
        <topology evidence="4">Single-pass type I membrane protein</topology>
    </subcellularLocation>
</comment>
<accession>A6NHS7</accession>